<name>RLUC_PASMU</name>
<accession>Q9CM51</accession>
<dbReference type="EC" id="5.4.99.24"/>
<dbReference type="EMBL" id="AE004439">
    <property type="protein sequence ID" value="AAK03076.1"/>
    <property type="molecule type" value="Genomic_DNA"/>
</dbReference>
<dbReference type="RefSeq" id="WP_005751728.1">
    <property type="nucleotide sequence ID" value="NC_002663.1"/>
</dbReference>
<dbReference type="SMR" id="Q9CM51"/>
<dbReference type="STRING" id="272843.PM0992"/>
<dbReference type="EnsemblBacteria" id="AAK03076">
    <property type="protein sequence ID" value="AAK03076"/>
    <property type="gene ID" value="PM0992"/>
</dbReference>
<dbReference type="GeneID" id="77206304"/>
<dbReference type="KEGG" id="pmu:PM0992"/>
<dbReference type="PATRIC" id="fig|272843.6.peg.1005"/>
<dbReference type="HOGENOM" id="CLU_016902_1_1_6"/>
<dbReference type="OrthoDB" id="9807829at2"/>
<dbReference type="Proteomes" id="UP000000809">
    <property type="component" value="Chromosome"/>
</dbReference>
<dbReference type="GO" id="GO:0160141">
    <property type="term" value="F:23S rRNA pseudouridine(955/2504/2580) synthase activity"/>
    <property type="evidence" value="ECO:0007669"/>
    <property type="project" value="UniProtKB-EC"/>
</dbReference>
<dbReference type="GO" id="GO:0003723">
    <property type="term" value="F:RNA binding"/>
    <property type="evidence" value="ECO:0007669"/>
    <property type="project" value="UniProtKB-KW"/>
</dbReference>
<dbReference type="GO" id="GO:0000455">
    <property type="term" value="P:enzyme-directed rRNA pseudouridine synthesis"/>
    <property type="evidence" value="ECO:0007669"/>
    <property type="project" value="UniProtKB-ARBA"/>
</dbReference>
<dbReference type="CDD" id="cd02869">
    <property type="entry name" value="PseudoU_synth_RluA_like"/>
    <property type="match status" value="1"/>
</dbReference>
<dbReference type="CDD" id="cd00165">
    <property type="entry name" value="S4"/>
    <property type="match status" value="1"/>
</dbReference>
<dbReference type="FunFam" id="3.10.290.10:FF:000010">
    <property type="entry name" value="Pseudouridine synthase"/>
    <property type="match status" value="1"/>
</dbReference>
<dbReference type="FunFam" id="3.30.2350.10:FF:000007">
    <property type="entry name" value="Pseudouridine synthase"/>
    <property type="match status" value="1"/>
</dbReference>
<dbReference type="Gene3D" id="3.30.2350.10">
    <property type="entry name" value="Pseudouridine synthase"/>
    <property type="match status" value="1"/>
</dbReference>
<dbReference type="Gene3D" id="3.10.290.10">
    <property type="entry name" value="RNA-binding S4 domain"/>
    <property type="match status" value="1"/>
</dbReference>
<dbReference type="InterPro" id="IPR020103">
    <property type="entry name" value="PsdUridine_synth_cat_dom_sf"/>
</dbReference>
<dbReference type="InterPro" id="IPR006224">
    <property type="entry name" value="PsdUridine_synth_RluA-like_CS"/>
</dbReference>
<dbReference type="InterPro" id="IPR006225">
    <property type="entry name" value="PsdUridine_synth_RluC/D"/>
</dbReference>
<dbReference type="InterPro" id="IPR006145">
    <property type="entry name" value="PsdUridine_synth_RsuA/RluA"/>
</dbReference>
<dbReference type="InterPro" id="IPR050188">
    <property type="entry name" value="RluA_PseudoU_synthase"/>
</dbReference>
<dbReference type="InterPro" id="IPR002942">
    <property type="entry name" value="S4_RNA-bd"/>
</dbReference>
<dbReference type="InterPro" id="IPR036986">
    <property type="entry name" value="S4_RNA-bd_sf"/>
</dbReference>
<dbReference type="NCBIfam" id="NF008249">
    <property type="entry name" value="PRK11025.1"/>
    <property type="match status" value="1"/>
</dbReference>
<dbReference type="NCBIfam" id="TIGR00005">
    <property type="entry name" value="rluA_subfam"/>
    <property type="match status" value="1"/>
</dbReference>
<dbReference type="PANTHER" id="PTHR21600">
    <property type="entry name" value="MITOCHONDRIAL RNA PSEUDOURIDINE SYNTHASE"/>
    <property type="match status" value="1"/>
</dbReference>
<dbReference type="PANTHER" id="PTHR21600:SF92">
    <property type="entry name" value="RIBOSOMAL LARGE SUBUNIT PSEUDOURIDINE SYNTHASE C"/>
    <property type="match status" value="1"/>
</dbReference>
<dbReference type="Pfam" id="PF00849">
    <property type="entry name" value="PseudoU_synth_2"/>
    <property type="match status" value="1"/>
</dbReference>
<dbReference type="Pfam" id="PF01479">
    <property type="entry name" value="S4"/>
    <property type="match status" value="1"/>
</dbReference>
<dbReference type="SMART" id="SM00363">
    <property type="entry name" value="S4"/>
    <property type="match status" value="1"/>
</dbReference>
<dbReference type="SUPFAM" id="SSF55174">
    <property type="entry name" value="Alpha-L RNA-binding motif"/>
    <property type="match status" value="1"/>
</dbReference>
<dbReference type="SUPFAM" id="SSF55120">
    <property type="entry name" value="Pseudouridine synthase"/>
    <property type="match status" value="1"/>
</dbReference>
<dbReference type="PROSITE" id="PS01129">
    <property type="entry name" value="PSI_RLU"/>
    <property type="match status" value="1"/>
</dbReference>
<dbReference type="PROSITE" id="PS50889">
    <property type="entry name" value="S4"/>
    <property type="match status" value="1"/>
</dbReference>
<organism>
    <name type="scientific">Pasteurella multocida (strain Pm70)</name>
    <dbReference type="NCBI Taxonomy" id="272843"/>
    <lineage>
        <taxon>Bacteria</taxon>
        <taxon>Pseudomonadati</taxon>
        <taxon>Pseudomonadota</taxon>
        <taxon>Gammaproteobacteria</taxon>
        <taxon>Pasteurellales</taxon>
        <taxon>Pasteurellaceae</taxon>
        <taxon>Pasteurella</taxon>
    </lineage>
</organism>
<feature type="chain" id="PRO_0000162672" description="Ribosomal large subunit pseudouridine synthase C">
    <location>
        <begin position="1"/>
        <end position="326"/>
    </location>
</feature>
<feature type="domain" description="S4 RNA-binding" evidence="2">
    <location>
        <begin position="26"/>
        <end position="98"/>
    </location>
</feature>
<feature type="active site" evidence="1">
    <location>
        <position position="150"/>
    </location>
</feature>
<sequence>MNQKKDEKVINQAVKMLTISEDEAGQRIDNYLLAKLKGVPKSLIYRILRKGEVRVNKGRIKPEYKLQANDIVRVPPVRVSEKEHAPISTKLNKVSQLEKQILFEDECLLVLNKPSGIAVHGGSGLSFGVIEALRTLRPDARFLELVHRLDRDTSGILLVAKKRSALRSLHEQLREKTVQKDYLALVRGQWQSHCKVVKAPLLKNELSSGERIVRVSEQGKPSETRFSIEERYEYATLVKASPVTGRTHQIRVHTQYAGHPIALDDKYGDKHFDEQMTQLGLTRLFLHAFSIRFEHPKTGETLRINAPLDPEMKKILGALREQKSSN</sequence>
<comment type="function">
    <text evidence="1">Responsible for synthesis of pseudouridine from uracil at positions 955, 2504 and 2580 in 23S ribosomal RNA.</text>
</comment>
<comment type="catalytic activity">
    <reaction>
        <text>uridine(955/2504/2580) in 23S rRNA = pseudouridine(955/2504/2580) in 23S rRNA</text>
        <dbReference type="Rhea" id="RHEA:42528"/>
        <dbReference type="Rhea" id="RHEA-COMP:10099"/>
        <dbReference type="Rhea" id="RHEA-COMP:10100"/>
        <dbReference type="ChEBI" id="CHEBI:65314"/>
        <dbReference type="ChEBI" id="CHEBI:65315"/>
        <dbReference type="EC" id="5.4.99.24"/>
    </reaction>
</comment>
<comment type="similarity">
    <text evidence="3">Belongs to the pseudouridine synthase RluA family.</text>
</comment>
<proteinExistence type="inferred from homology"/>
<reference key="1">
    <citation type="journal article" date="2001" name="Proc. Natl. Acad. Sci. U.S.A.">
        <title>Complete genomic sequence of Pasteurella multocida Pm70.</title>
        <authorList>
            <person name="May B.J."/>
            <person name="Zhang Q."/>
            <person name="Li L.L."/>
            <person name="Paustian M.L."/>
            <person name="Whittam T.S."/>
            <person name="Kapur V."/>
        </authorList>
    </citation>
    <scope>NUCLEOTIDE SEQUENCE [LARGE SCALE GENOMIC DNA]</scope>
    <source>
        <strain>Pm70</strain>
    </source>
</reference>
<protein>
    <recommendedName>
        <fullName>Ribosomal large subunit pseudouridine synthase C</fullName>
        <ecNumber>5.4.99.24</ecNumber>
    </recommendedName>
    <alternativeName>
        <fullName>23S rRNA pseudouridine(955/2504/2580) synthase</fullName>
    </alternativeName>
    <alternativeName>
        <fullName>rRNA pseudouridylate synthase C</fullName>
    </alternativeName>
    <alternativeName>
        <fullName>rRNA-uridine isomerase C</fullName>
    </alternativeName>
</protein>
<gene>
    <name type="primary">rluC</name>
    <name type="ordered locus">PM0992</name>
</gene>
<evidence type="ECO:0000250" key="1"/>
<evidence type="ECO:0000255" key="2">
    <source>
        <dbReference type="PROSITE-ProRule" id="PRU00182"/>
    </source>
</evidence>
<evidence type="ECO:0000305" key="3"/>
<keyword id="KW-0413">Isomerase</keyword>
<keyword id="KW-1185">Reference proteome</keyword>
<keyword id="KW-0694">RNA-binding</keyword>
<keyword id="KW-0698">rRNA processing</keyword>